<keyword id="KW-0067">ATP-binding</keyword>
<keyword id="KW-0319">Glycerol metabolism</keyword>
<keyword id="KW-0418">Kinase</keyword>
<keyword id="KW-0547">Nucleotide-binding</keyword>
<keyword id="KW-0597">Phosphoprotein</keyword>
<keyword id="KW-0808">Transferase</keyword>
<dbReference type="EC" id="2.7.1.30" evidence="1"/>
<dbReference type="EMBL" id="CP001175">
    <property type="protein sequence ID" value="ACK39379.1"/>
    <property type="molecule type" value="Genomic_DNA"/>
</dbReference>
<dbReference type="RefSeq" id="WP_003730217.1">
    <property type="nucleotide sequence ID" value="NC_011660.1"/>
</dbReference>
<dbReference type="SMR" id="B8DHL0"/>
<dbReference type="KEGG" id="lmh:LMHCC_1031"/>
<dbReference type="HOGENOM" id="CLU_009281_2_3_9"/>
<dbReference type="UniPathway" id="UPA00618">
    <property type="reaction ID" value="UER00672"/>
</dbReference>
<dbReference type="GO" id="GO:0005829">
    <property type="term" value="C:cytosol"/>
    <property type="evidence" value="ECO:0007669"/>
    <property type="project" value="TreeGrafter"/>
</dbReference>
<dbReference type="GO" id="GO:0005524">
    <property type="term" value="F:ATP binding"/>
    <property type="evidence" value="ECO:0007669"/>
    <property type="project" value="UniProtKB-UniRule"/>
</dbReference>
<dbReference type="GO" id="GO:0004370">
    <property type="term" value="F:glycerol kinase activity"/>
    <property type="evidence" value="ECO:0000250"/>
    <property type="project" value="UniProtKB"/>
</dbReference>
<dbReference type="GO" id="GO:0019563">
    <property type="term" value="P:glycerol catabolic process"/>
    <property type="evidence" value="ECO:0007669"/>
    <property type="project" value="UniProtKB-UniRule"/>
</dbReference>
<dbReference type="GO" id="GO:0006071">
    <property type="term" value="P:glycerol metabolic process"/>
    <property type="evidence" value="ECO:0000250"/>
    <property type="project" value="UniProtKB"/>
</dbReference>
<dbReference type="GO" id="GO:0006072">
    <property type="term" value="P:glycerol-3-phosphate metabolic process"/>
    <property type="evidence" value="ECO:0007669"/>
    <property type="project" value="InterPro"/>
</dbReference>
<dbReference type="CDD" id="cd07786">
    <property type="entry name" value="FGGY_EcGK_like"/>
    <property type="match status" value="1"/>
</dbReference>
<dbReference type="FunFam" id="3.30.420.40:FF:000007">
    <property type="entry name" value="Glycerol kinase"/>
    <property type="match status" value="1"/>
</dbReference>
<dbReference type="FunFam" id="3.30.420.40:FF:000008">
    <property type="entry name" value="Glycerol kinase"/>
    <property type="match status" value="1"/>
</dbReference>
<dbReference type="Gene3D" id="3.30.420.40">
    <property type="match status" value="2"/>
</dbReference>
<dbReference type="HAMAP" id="MF_00186">
    <property type="entry name" value="Glycerol_kin"/>
    <property type="match status" value="1"/>
</dbReference>
<dbReference type="InterPro" id="IPR043129">
    <property type="entry name" value="ATPase_NBD"/>
</dbReference>
<dbReference type="InterPro" id="IPR000577">
    <property type="entry name" value="Carb_kinase_FGGY"/>
</dbReference>
<dbReference type="InterPro" id="IPR018483">
    <property type="entry name" value="Carb_kinase_FGGY_CS"/>
</dbReference>
<dbReference type="InterPro" id="IPR018485">
    <property type="entry name" value="FGGY_C"/>
</dbReference>
<dbReference type="InterPro" id="IPR018484">
    <property type="entry name" value="FGGY_N"/>
</dbReference>
<dbReference type="InterPro" id="IPR005999">
    <property type="entry name" value="Glycerol_kin"/>
</dbReference>
<dbReference type="NCBIfam" id="TIGR01311">
    <property type="entry name" value="glycerol_kin"/>
    <property type="match status" value="1"/>
</dbReference>
<dbReference type="NCBIfam" id="NF000756">
    <property type="entry name" value="PRK00047.1"/>
    <property type="match status" value="1"/>
</dbReference>
<dbReference type="PANTHER" id="PTHR10196:SF69">
    <property type="entry name" value="GLYCEROL KINASE"/>
    <property type="match status" value="1"/>
</dbReference>
<dbReference type="PANTHER" id="PTHR10196">
    <property type="entry name" value="SUGAR KINASE"/>
    <property type="match status" value="1"/>
</dbReference>
<dbReference type="Pfam" id="PF02782">
    <property type="entry name" value="FGGY_C"/>
    <property type="match status" value="1"/>
</dbReference>
<dbReference type="Pfam" id="PF00370">
    <property type="entry name" value="FGGY_N"/>
    <property type="match status" value="1"/>
</dbReference>
<dbReference type="PIRSF" id="PIRSF000538">
    <property type="entry name" value="GlpK"/>
    <property type="match status" value="1"/>
</dbReference>
<dbReference type="SUPFAM" id="SSF53067">
    <property type="entry name" value="Actin-like ATPase domain"/>
    <property type="match status" value="2"/>
</dbReference>
<dbReference type="PROSITE" id="PS00445">
    <property type="entry name" value="FGGY_KINASES_2"/>
    <property type="match status" value="1"/>
</dbReference>
<gene>
    <name evidence="1" type="primary">glpK</name>
    <name type="ordered locus">LMHCC_1031</name>
</gene>
<evidence type="ECO:0000255" key="1">
    <source>
        <dbReference type="HAMAP-Rule" id="MF_00186"/>
    </source>
</evidence>
<protein>
    <recommendedName>
        <fullName evidence="1">Glycerol kinase</fullName>
        <ecNumber evidence="1">2.7.1.30</ecNumber>
    </recommendedName>
    <alternativeName>
        <fullName evidence="1">ATP:glycerol 3-phosphotransferase</fullName>
    </alternativeName>
    <alternativeName>
        <fullName evidence="1">Glycerokinase</fullName>
        <shortName evidence="1">GK</shortName>
    </alternativeName>
</protein>
<accession>B8DHL0</accession>
<feature type="chain" id="PRO_1000124195" description="Glycerol kinase">
    <location>
        <begin position="1"/>
        <end position="497"/>
    </location>
</feature>
<feature type="binding site" evidence="1">
    <location>
        <position position="13"/>
    </location>
    <ligand>
        <name>ADP</name>
        <dbReference type="ChEBI" id="CHEBI:456216"/>
    </ligand>
</feature>
<feature type="binding site" evidence="1">
    <location>
        <position position="13"/>
    </location>
    <ligand>
        <name>ATP</name>
        <dbReference type="ChEBI" id="CHEBI:30616"/>
    </ligand>
</feature>
<feature type="binding site" evidence="1">
    <location>
        <position position="13"/>
    </location>
    <ligand>
        <name>sn-glycerol 3-phosphate</name>
        <dbReference type="ChEBI" id="CHEBI:57597"/>
    </ligand>
</feature>
<feature type="binding site" evidence="1">
    <location>
        <position position="14"/>
    </location>
    <ligand>
        <name>ATP</name>
        <dbReference type="ChEBI" id="CHEBI:30616"/>
    </ligand>
</feature>
<feature type="binding site" evidence="1">
    <location>
        <position position="15"/>
    </location>
    <ligand>
        <name>ATP</name>
        <dbReference type="ChEBI" id="CHEBI:30616"/>
    </ligand>
</feature>
<feature type="binding site" evidence="1">
    <location>
        <position position="17"/>
    </location>
    <ligand>
        <name>ADP</name>
        <dbReference type="ChEBI" id="CHEBI:456216"/>
    </ligand>
</feature>
<feature type="binding site" evidence="1">
    <location>
        <position position="83"/>
    </location>
    <ligand>
        <name>glycerol</name>
        <dbReference type="ChEBI" id="CHEBI:17754"/>
    </ligand>
</feature>
<feature type="binding site" evidence="1">
    <location>
        <position position="83"/>
    </location>
    <ligand>
        <name>sn-glycerol 3-phosphate</name>
        <dbReference type="ChEBI" id="CHEBI:57597"/>
    </ligand>
</feature>
<feature type="binding site" evidence="1">
    <location>
        <position position="84"/>
    </location>
    <ligand>
        <name>glycerol</name>
        <dbReference type="ChEBI" id="CHEBI:17754"/>
    </ligand>
</feature>
<feature type="binding site" evidence="1">
    <location>
        <position position="84"/>
    </location>
    <ligand>
        <name>sn-glycerol 3-phosphate</name>
        <dbReference type="ChEBI" id="CHEBI:57597"/>
    </ligand>
</feature>
<feature type="binding site" evidence="1">
    <location>
        <position position="135"/>
    </location>
    <ligand>
        <name>glycerol</name>
        <dbReference type="ChEBI" id="CHEBI:17754"/>
    </ligand>
</feature>
<feature type="binding site" evidence="1">
    <location>
        <position position="135"/>
    </location>
    <ligand>
        <name>sn-glycerol 3-phosphate</name>
        <dbReference type="ChEBI" id="CHEBI:57597"/>
    </ligand>
</feature>
<feature type="binding site" evidence="1">
    <location>
        <position position="245"/>
    </location>
    <ligand>
        <name>glycerol</name>
        <dbReference type="ChEBI" id="CHEBI:17754"/>
    </ligand>
</feature>
<feature type="binding site" evidence="1">
    <location>
        <position position="245"/>
    </location>
    <ligand>
        <name>sn-glycerol 3-phosphate</name>
        <dbReference type="ChEBI" id="CHEBI:57597"/>
    </ligand>
</feature>
<feature type="binding site" evidence="1">
    <location>
        <position position="246"/>
    </location>
    <ligand>
        <name>glycerol</name>
        <dbReference type="ChEBI" id="CHEBI:17754"/>
    </ligand>
</feature>
<feature type="binding site" evidence="1">
    <location>
        <position position="267"/>
    </location>
    <ligand>
        <name>ADP</name>
        <dbReference type="ChEBI" id="CHEBI:456216"/>
    </ligand>
</feature>
<feature type="binding site" evidence="1">
    <location>
        <position position="267"/>
    </location>
    <ligand>
        <name>ATP</name>
        <dbReference type="ChEBI" id="CHEBI:30616"/>
    </ligand>
</feature>
<feature type="binding site" evidence="1">
    <location>
        <position position="310"/>
    </location>
    <ligand>
        <name>ADP</name>
        <dbReference type="ChEBI" id="CHEBI:456216"/>
    </ligand>
</feature>
<feature type="binding site" evidence="1">
    <location>
        <position position="310"/>
    </location>
    <ligand>
        <name>ATP</name>
        <dbReference type="ChEBI" id="CHEBI:30616"/>
    </ligand>
</feature>
<feature type="binding site" evidence="1">
    <location>
        <position position="314"/>
    </location>
    <ligand>
        <name>ATP</name>
        <dbReference type="ChEBI" id="CHEBI:30616"/>
    </ligand>
</feature>
<feature type="binding site" evidence="1">
    <location>
        <position position="411"/>
    </location>
    <ligand>
        <name>ADP</name>
        <dbReference type="ChEBI" id="CHEBI:456216"/>
    </ligand>
</feature>
<feature type="binding site" evidence="1">
    <location>
        <position position="411"/>
    </location>
    <ligand>
        <name>ATP</name>
        <dbReference type="ChEBI" id="CHEBI:30616"/>
    </ligand>
</feature>
<feature type="binding site" evidence="1">
    <location>
        <position position="415"/>
    </location>
    <ligand>
        <name>ADP</name>
        <dbReference type="ChEBI" id="CHEBI:456216"/>
    </ligand>
</feature>
<feature type="modified residue" description="Phosphohistidine; by HPr" evidence="1">
    <location>
        <position position="231"/>
    </location>
</feature>
<comment type="function">
    <text evidence="1">Key enzyme in the regulation of glycerol uptake and metabolism. Catalyzes the phosphorylation of glycerol to yield sn-glycerol 3-phosphate.</text>
</comment>
<comment type="catalytic activity">
    <reaction evidence="1">
        <text>glycerol + ATP = sn-glycerol 3-phosphate + ADP + H(+)</text>
        <dbReference type="Rhea" id="RHEA:21644"/>
        <dbReference type="ChEBI" id="CHEBI:15378"/>
        <dbReference type="ChEBI" id="CHEBI:17754"/>
        <dbReference type="ChEBI" id="CHEBI:30616"/>
        <dbReference type="ChEBI" id="CHEBI:57597"/>
        <dbReference type="ChEBI" id="CHEBI:456216"/>
        <dbReference type="EC" id="2.7.1.30"/>
    </reaction>
</comment>
<comment type="activity regulation">
    <text evidence="1">Activated by phosphorylation and inhibited by fructose 1,6-bisphosphate (FBP).</text>
</comment>
<comment type="pathway">
    <text evidence="1">Polyol metabolism; glycerol degradation via glycerol kinase pathway; sn-glycerol 3-phosphate from glycerol: step 1/1.</text>
</comment>
<comment type="subunit">
    <text evidence="1">Homotetramer and homodimer (in equilibrium).</text>
</comment>
<comment type="PTM">
    <text evidence="1">The phosphoenolpyruvate-dependent sugar phosphotransferase system (PTS), including enzyme I, and histidine-containing protein (HPr) are required for the phosphorylation, which leads to the activation of the enzyme.</text>
</comment>
<comment type="similarity">
    <text evidence="1">Belongs to the FGGY kinase family.</text>
</comment>
<proteinExistence type="inferred from homology"/>
<name>GLPK_LISMH</name>
<reference key="1">
    <citation type="journal article" date="2011" name="J. Bacteriol.">
        <title>Genome sequence of lineage III Listeria monocytogenes strain HCC23.</title>
        <authorList>
            <person name="Steele C.L."/>
            <person name="Donaldson J.R."/>
            <person name="Paul D."/>
            <person name="Banes M.M."/>
            <person name="Arick T."/>
            <person name="Bridges S.M."/>
            <person name="Lawrence M.L."/>
        </authorList>
    </citation>
    <scope>NUCLEOTIDE SEQUENCE [LARGE SCALE GENOMIC DNA]</scope>
    <source>
        <strain>HCC23</strain>
    </source>
</reference>
<organism>
    <name type="scientific">Listeria monocytogenes serotype 4a (strain HCC23)</name>
    <dbReference type="NCBI Taxonomy" id="552536"/>
    <lineage>
        <taxon>Bacteria</taxon>
        <taxon>Bacillati</taxon>
        <taxon>Bacillota</taxon>
        <taxon>Bacilli</taxon>
        <taxon>Bacillales</taxon>
        <taxon>Listeriaceae</taxon>
        <taxon>Listeria</taxon>
    </lineage>
</organism>
<sequence length="497" mass="55477">MEKKYILALDQGTTSSRAMIIDEEGEVIGVAQEEFDQIFPKPGWVEHNANEIWASILAVIAGVLLKTNISSKEIAGIGITNQRETTVIWDKESGNPIYNAIVWQSRQTEDICKQLRKDGYEDTIRSKTGLLIDPYFAGTKARWILDHVDGAQERAEKGELLFGTIDTWLVWKLTGGRAHITDYSNASRTLLYNIYDLEWDDELLKMLNIPRAMLPEVRPSSEVYADTVPYHFFGEEVPVAGIAGDQQAALFGQGCFEKGMAKNTYGTGCFLLMNTGEKAVRSENGLLTTLAWGIDGKVEYALEGSIFVAGSAIQWLRDGLRMVRQSSDSENYASRIESSDGVYVVPAFVGLGAPYWDSDVRGAVFGLTRGTEKEQFIRATLESLAYQTRDVLYAMEQDSGISLKTLRVDGGASANNFLMQFQSDILGVPVERPENKETTVLGAAFLAGLAVGVWKDKNEIKKHWKLDKRFEVEMKDEQREDLYEGWHKAVKAAQAFK</sequence>